<proteinExistence type="inferred from homology"/>
<comment type="function">
    <text evidence="1">Binds directly to 23S ribosomal RNA and is necessary for the in vitro assembly process of the 50S ribosomal subunit. It is not involved in the protein synthesizing functions of that subunit.</text>
</comment>
<comment type="similarity">
    <text evidence="1">Belongs to the bacterial ribosomal protein bL20 family.</text>
</comment>
<keyword id="KW-0687">Ribonucleoprotein</keyword>
<keyword id="KW-0689">Ribosomal protein</keyword>
<keyword id="KW-0694">RNA-binding</keyword>
<keyword id="KW-0699">rRNA-binding</keyword>
<protein>
    <recommendedName>
        <fullName evidence="1">Large ribosomal subunit protein bL20</fullName>
    </recommendedName>
    <alternativeName>
        <fullName evidence="2">50S ribosomal protein L20</fullName>
    </alternativeName>
</protein>
<sequence>MPRVKRGVQARARHKKVLKQAKGYYGARSRVYRVAFQAVTKAGQYAYRDRRAKKRQFRQLWIARINAASRQNGLSYSRFINGLKKASIEIDRKILADIAVFDKAAFAVLVEKAKAAL</sequence>
<evidence type="ECO:0000255" key="1">
    <source>
        <dbReference type="HAMAP-Rule" id="MF_00382"/>
    </source>
</evidence>
<evidence type="ECO:0000305" key="2"/>
<reference key="1">
    <citation type="journal article" date="2003" name="Lancet">
        <title>Genome sequence of Vibrio parahaemolyticus: a pathogenic mechanism distinct from that of V. cholerae.</title>
        <authorList>
            <person name="Makino K."/>
            <person name="Oshima K."/>
            <person name="Kurokawa K."/>
            <person name="Yokoyama K."/>
            <person name="Uda T."/>
            <person name="Tagomori K."/>
            <person name="Iijima Y."/>
            <person name="Najima M."/>
            <person name="Nakano M."/>
            <person name="Yamashita A."/>
            <person name="Kubota Y."/>
            <person name="Kimura S."/>
            <person name="Yasunaga T."/>
            <person name="Honda T."/>
            <person name="Shinagawa H."/>
            <person name="Hattori M."/>
            <person name="Iida T."/>
        </authorList>
    </citation>
    <scope>NUCLEOTIDE SEQUENCE [LARGE SCALE GENOMIC DNA]</scope>
    <source>
        <strain>RIMD 2210633</strain>
    </source>
</reference>
<gene>
    <name evidence="1" type="primary">rplT</name>
    <name type="ordered locus">VP1282</name>
</gene>
<dbReference type="EMBL" id="BA000031">
    <property type="protein sequence ID" value="BAC59545.1"/>
    <property type="molecule type" value="Genomic_DNA"/>
</dbReference>
<dbReference type="RefSeq" id="NP_797661.1">
    <property type="nucleotide sequence ID" value="NC_004603.1"/>
</dbReference>
<dbReference type="RefSeq" id="WP_004727974.1">
    <property type="nucleotide sequence ID" value="NC_004603.1"/>
</dbReference>
<dbReference type="SMR" id="P0A481"/>
<dbReference type="GeneID" id="95677414"/>
<dbReference type="KEGG" id="vpa:VP1282"/>
<dbReference type="PATRIC" id="fig|223926.6.peg.1223"/>
<dbReference type="eggNOG" id="COG0292">
    <property type="taxonomic scope" value="Bacteria"/>
</dbReference>
<dbReference type="HOGENOM" id="CLU_123265_0_1_6"/>
<dbReference type="PRO" id="PR:P0A481"/>
<dbReference type="Proteomes" id="UP000002493">
    <property type="component" value="Chromosome 1"/>
</dbReference>
<dbReference type="GO" id="GO:1990904">
    <property type="term" value="C:ribonucleoprotein complex"/>
    <property type="evidence" value="ECO:0007669"/>
    <property type="project" value="UniProtKB-KW"/>
</dbReference>
<dbReference type="GO" id="GO:0005840">
    <property type="term" value="C:ribosome"/>
    <property type="evidence" value="ECO:0007669"/>
    <property type="project" value="UniProtKB-KW"/>
</dbReference>
<dbReference type="GO" id="GO:0019843">
    <property type="term" value="F:rRNA binding"/>
    <property type="evidence" value="ECO:0007669"/>
    <property type="project" value="UniProtKB-UniRule"/>
</dbReference>
<dbReference type="GO" id="GO:0003735">
    <property type="term" value="F:structural constituent of ribosome"/>
    <property type="evidence" value="ECO:0007669"/>
    <property type="project" value="InterPro"/>
</dbReference>
<dbReference type="GO" id="GO:0000027">
    <property type="term" value="P:ribosomal large subunit assembly"/>
    <property type="evidence" value="ECO:0007669"/>
    <property type="project" value="UniProtKB-UniRule"/>
</dbReference>
<dbReference type="GO" id="GO:0006412">
    <property type="term" value="P:translation"/>
    <property type="evidence" value="ECO:0007669"/>
    <property type="project" value="InterPro"/>
</dbReference>
<dbReference type="CDD" id="cd07026">
    <property type="entry name" value="Ribosomal_L20"/>
    <property type="match status" value="1"/>
</dbReference>
<dbReference type="FunFam" id="1.10.1900.20:FF:000001">
    <property type="entry name" value="50S ribosomal protein L20"/>
    <property type="match status" value="1"/>
</dbReference>
<dbReference type="Gene3D" id="6.10.160.10">
    <property type="match status" value="1"/>
</dbReference>
<dbReference type="Gene3D" id="1.10.1900.20">
    <property type="entry name" value="Ribosomal protein L20"/>
    <property type="match status" value="1"/>
</dbReference>
<dbReference type="HAMAP" id="MF_00382">
    <property type="entry name" value="Ribosomal_bL20"/>
    <property type="match status" value="1"/>
</dbReference>
<dbReference type="InterPro" id="IPR005813">
    <property type="entry name" value="Ribosomal_bL20"/>
</dbReference>
<dbReference type="InterPro" id="IPR049946">
    <property type="entry name" value="RIBOSOMAL_L20_CS"/>
</dbReference>
<dbReference type="InterPro" id="IPR035566">
    <property type="entry name" value="Ribosomal_protein_bL20_C"/>
</dbReference>
<dbReference type="NCBIfam" id="TIGR01032">
    <property type="entry name" value="rplT_bact"/>
    <property type="match status" value="1"/>
</dbReference>
<dbReference type="PANTHER" id="PTHR10986">
    <property type="entry name" value="39S RIBOSOMAL PROTEIN L20"/>
    <property type="match status" value="1"/>
</dbReference>
<dbReference type="Pfam" id="PF00453">
    <property type="entry name" value="Ribosomal_L20"/>
    <property type="match status" value="1"/>
</dbReference>
<dbReference type="PRINTS" id="PR00062">
    <property type="entry name" value="RIBOSOMALL20"/>
</dbReference>
<dbReference type="SUPFAM" id="SSF74731">
    <property type="entry name" value="Ribosomal protein L20"/>
    <property type="match status" value="1"/>
</dbReference>
<dbReference type="PROSITE" id="PS00937">
    <property type="entry name" value="RIBOSOMAL_L20"/>
    <property type="match status" value="1"/>
</dbReference>
<name>RL20_VIBPA</name>
<accession>P0A481</accession>
<accession>Q87Q68</accession>
<accession>Q8CM22</accession>
<organism>
    <name type="scientific">Vibrio parahaemolyticus serotype O3:K6 (strain RIMD 2210633)</name>
    <dbReference type="NCBI Taxonomy" id="223926"/>
    <lineage>
        <taxon>Bacteria</taxon>
        <taxon>Pseudomonadati</taxon>
        <taxon>Pseudomonadota</taxon>
        <taxon>Gammaproteobacteria</taxon>
        <taxon>Vibrionales</taxon>
        <taxon>Vibrionaceae</taxon>
        <taxon>Vibrio</taxon>
    </lineage>
</organism>
<feature type="chain" id="PRO_0000177261" description="Large ribosomal subunit protein bL20">
    <location>
        <begin position="1"/>
        <end position="117"/>
    </location>
</feature>